<protein>
    <recommendedName>
        <fullName evidence="3">Alpha-enolase</fullName>
        <ecNumber>4.2.1.11</ecNumber>
    </recommendedName>
    <alternativeName>
        <fullName evidence="3">2-phospho-D-glycerate hydro-lyase</fullName>
    </alternativeName>
    <alternativeName>
        <fullName evidence="3">Enolase 1</fullName>
    </alternativeName>
    <alternativeName>
        <fullName evidence="3">Non-neural enolase</fullName>
        <shortName evidence="3">NNE</shortName>
    </alternativeName>
</protein>
<comment type="function">
    <text evidence="3">Glycolytic enzyme the catalyzes the conversion of 2-phosphoglycerate to phosphoenolpyruvate. In addition to glycolysis, involved in various processes such as growth control, hypoxia tolerance and allergic responses. May also function in the intravascular and pericellular fibrinolytic system due to its ability to serve as a receptor and activator of plasminogen on the cell surface of several cell-types such as leukocytes and neurons. Stimulates immunoglobulin production.</text>
</comment>
<comment type="catalytic activity">
    <reaction evidence="3">
        <text>(2R)-2-phosphoglycerate = phosphoenolpyruvate + H2O</text>
        <dbReference type="Rhea" id="RHEA:10164"/>
        <dbReference type="ChEBI" id="CHEBI:15377"/>
        <dbReference type="ChEBI" id="CHEBI:58289"/>
        <dbReference type="ChEBI" id="CHEBI:58702"/>
        <dbReference type="EC" id="4.2.1.11"/>
    </reaction>
</comment>
<comment type="cofactor">
    <cofactor evidence="3">
        <name>Mg(2+)</name>
        <dbReference type="ChEBI" id="CHEBI:18420"/>
    </cofactor>
    <text evidence="3">Binds two Mg(2+) per subunit. Required for catalysis and for stabilizing the dimer.</text>
</comment>
<comment type="pathway">
    <text evidence="3">Carbohydrate degradation; glycolysis; pyruvate from D-glyceraldehyde 3-phosphate: step 4/5.</text>
</comment>
<comment type="subunit">
    <text evidence="3 4">Mammalian enolase is composed of 3 isozyme subunits, alpha, beta and gamma, which can form homodimers or heterodimers which are cell-type and development-specific. ENO1 interacts with PLG in the neuronal plasma membrane and promotes its activation. The C-terminal lysine is required for this binding. Interacts with ENO4 and PGAM2 (By similarity). Interacts with CMTM6 (By similarity).</text>
</comment>
<comment type="subcellular location">
    <subcellularLocation>
        <location evidence="3">Cytoplasm</location>
    </subcellularLocation>
    <subcellularLocation>
        <location evidence="3">Cell membrane</location>
    </subcellularLocation>
    <text evidence="3">Can translocate to the plasma membrane in either the homodimeric (alpha/alpha) or heterodimeric (alpha/gamma) form. ENO1 is localized to the M-band.</text>
</comment>
<comment type="PTM">
    <text evidence="3">ISGylated.</text>
</comment>
<comment type="PTM">
    <text evidence="3">Lysine 2-hydroxyisobutyrylation (Khib) by p300/EP300 activates the phosphopyruvate hydratase activity.</text>
</comment>
<comment type="similarity">
    <text evidence="6">Belongs to the enolase family.</text>
</comment>
<organism>
    <name type="scientific">Mesocricetus auratus</name>
    <name type="common">Golden hamster</name>
    <dbReference type="NCBI Taxonomy" id="10036"/>
    <lineage>
        <taxon>Eukaryota</taxon>
        <taxon>Metazoa</taxon>
        <taxon>Chordata</taxon>
        <taxon>Craniata</taxon>
        <taxon>Vertebrata</taxon>
        <taxon>Euteleostomi</taxon>
        <taxon>Mammalia</taxon>
        <taxon>Eutheria</taxon>
        <taxon>Euarchontoglires</taxon>
        <taxon>Glires</taxon>
        <taxon>Rodentia</taxon>
        <taxon>Myomorpha</taxon>
        <taxon>Muroidea</taxon>
        <taxon>Cricetidae</taxon>
        <taxon>Cricetinae</taxon>
        <taxon>Mesocricetus</taxon>
    </lineage>
</organism>
<accession>P86210</accession>
<gene>
    <name evidence="3" type="primary">ENO1</name>
</gene>
<feature type="chain" id="PRO_0000394395" description="Alpha-enolase">
    <location>
        <begin position="1" status="less than"/>
        <end position="223"/>
    </location>
</feature>
<feature type="region of interest" description="Required for interaction with PLG" evidence="2">
    <location>
        <begin position="202" status="less than"/>
        <end position="223"/>
    </location>
</feature>
<feature type="active site" description="Proton donor" evidence="3">
    <location>
        <position position="69"/>
    </location>
</feature>
<feature type="active site" description="Proton acceptor" evidence="3">
    <location>
        <position position="141"/>
    </location>
</feature>
<feature type="binding site" evidence="3">
    <location>
        <position position="8"/>
    </location>
    <ligand>
        <name>Mg(2+)</name>
        <dbReference type="ChEBI" id="CHEBI:18420"/>
        <label>1</label>
    </ligand>
</feature>
<feature type="binding site" evidence="5">
    <location>
        <position position="39"/>
    </location>
    <ligand>
        <name>substrate</name>
    </ligand>
</feature>
<feature type="binding site" evidence="3">
    <location>
        <position position="99"/>
    </location>
    <ligand>
        <name>Mg(2+)</name>
        <dbReference type="ChEBI" id="CHEBI:18420"/>
        <label>2</label>
    </ligand>
</feature>
<feature type="binding site" evidence="3">
    <location>
        <position position="119"/>
    </location>
    <ligand>
        <name>Mg(2+)</name>
        <dbReference type="ChEBI" id="CHEBI:18420"/>
        <label>2</label>
    </ligand>
</feature>
<feature type="binding site" evidence="5">
    <location>
        <position position="119"/>
    </location>
    <ligand>
        <name>substrate</name>
    </ligand>
</feature>
<feature type="binding site" evidence="5">
    <location>
        <begin position="168"/>
        <end position="171"/>
    </location>
    <ligand>
        <name>substrate</name>
    </ligand>
</feature>
<feature type="binding site" evidence="5">
    <location>
        <position position="192"/>
    </location>
    <ligand>
        <name>substrate</name>
    </ligand>
</feature>
<feature type="modified residue" description="Phosphotyrosine" evidence="3">
    <location>
        <position position="12"/>
    </location>
</feature>
<feature type="modified residue" description="N6-acetyllysine" evidence="3">
    <location>
        <position position="25"/>
    </location>
</feature>
<feature type="modified residue" description="N6-acetyllysine" evidence="3">
    <location>
        <position position="61"/>
    </location>
</feature>
<feature type="modified residue" description="N6-acetyllysine; alternate" evidence="3">
    <location>
        <position position="87"/>
    </location>
</feature>
<feature type="modified residue" description="N6-malonyllysine; alternate" evidence="1">
    <location>
        <position position="87"/>
    </location>
</feature>
<feature type="modified residue" description="N6-succinyllysine; alternate" evidence="4">
    <location>
        <position position="87"/>
    </location>
</feature>
<feature type="modified residue" description="N6-acetyllysine" evidence="4">
    <location>
        <position position="133"/>
    </location>
</feature>
<feature type="modified residue" description="N6-acetyllysine" evidence="4">
    <location>
        <position position="141"/>
    </location>
</feature>
<feature type="modified residue" description="N6-acetyllysine; alternate" evidence="3">
    <location>
        <position position="215"/>
    </location>
</feature>
<feature type="modified residue" description="N6-malonyllysine; alternate" evidence="1">
    <location>
        <position position="215"/>
    </location>
</feature>
<feature type="modified residue" description="N6-succinyllysine; alternate" evidence="4">
    <location>
        <position position="215"/>
    </location>
</feature>
<feature type="unsure residue" description="S or T">
    <location>
        <position position="111"/>
    </location>
</feature>
<feature type="non-consecutive residues" evidence="7">
    <location>
        <begin position="18"/>
        <end position="19"/>
    </location>
</feature>
<feature type="non-consecutive residues" evidence="7">
    <location>
        <begin position="34"/>
        <end position="35"/>
    </location>
</feature>
<feature type="non-consecutive residues" evidence="7">
    <location>
        <begin position="51"/>
        <end position="52"/>
    </location>
</feature>
<feature type="non-consecutive residues" evidence="7">
    <location>
        <begin position="87"/>
        <end position="88"/>
    </location>
</feature>
<feature type="non-consecutive residues" evidence="7">
    <location>
        <begin position="107"/>
        <end position="108"/>
    </location>
</feature>
<feature type="non-consecutive residues" evidence="7">
    <location>
        <begin position="128"/>
        <end position="129"/>
    </location>
</feature>
<feature type="non-consecutive residues" evidence="7">
    <location>
        <begin position="201"/>
        <end position="202"/>
    </location>
</feature>
<feature type="non-consecutive residues" evidence="7">
    <location>
        <begin position="215"/>
        <end position="216"/>
    </location>
</feature>
<feature type="non-terminal residue">
    <location>
        <position position="1"/>
    </location>
</feature>
<proteinExistence type="evidence at protein level"/>
<name>ENOA_MESAU</name>
<keyword id="KW-0007">Acetylation</keyword>
<keyword id="KW-1003">Cell membrane</keyword>
<keyword id="KW-0963">Cytoplasm</keyword>
<keyword id="KW-0324">Glycolysis</keyword>
<keyword id="KW-0456">Lyase</keyword>
<keyword id="KW-0460">Magnesium</keyword>
<keyword id="KW-0472">Membrane</keyword>
<keyword id="KW-0479">Metal-binding</keyword>
<keyword id="KW-0597">Phosphoprotein</keyword>
<keyword id="KW-0617">Plasminogen activation</keyword>
<keyword id="KW-1185">Reference proteome</keyword>
<keyword id="KW-0678">Repressor</keyword>
<keyword id="KW-0804">Transcription</keyword>
<keyword id="KW-0805">Transcription regulation</keyword>
<keyword id="KW-0832">Ubl conjugation</keyword>
<sequence>AAVPSGASTGIYEALELRAVEHINKTIAPALVSKLAMQEFMILPVGASSFRIGAEVYHNLKDATNVGDEGGFAPNILENKEALELLKAGYTDQVVIGMDVAASEFYRFTASAGIQVVGDDLTVTNPKRAASEKSCNCLLLKVNQIGSVTESLQACKLAQSNGWGVMVSHRSGETEDTFIADLVVGLCTGQIKTGAPCRSERYNQILRIEEELGSKSFRNPLAK</sequence>
<dbReference type="EC" id="4.2.1.11"/>
<dbReference type="SMR" id="P86210"/>
<dbReference type="UniPathway" id="UPA00109">
    <property type="reaction ID" value="UER00187"/>
</dbReference>
<dbReference type="Proteomes" id="UP000189706">
    <property type="component" value="Unplaced"/>
</dbReference>
<dbReference type="GO" id="GO:0000015">
    <property type="term" value="C:phosphopyruvate hydratase complex"/>
    <property type="evidence" value="ECO:0007669"/>
    <property type="project" value="InterPro"/>
</dbReference>
<dbReference type="GO" id="GO:0005886">
    <property type="term" value="C:plasma membrane"/>
    <property type="evidence" value="ECO:0007669"/>
    <property type="project" value="UniProtKB-SubCell"/>
</dbReference>
<dbReference type="GO" id="GO:0000287">
    <property type="term" value="F:magnesium ion binding"/>
    <property type="evidence" value="ECO:0007669"/>
    <property type="project" value="InterPro"/>
</dbReference>
<dbReference type="GO" id="GO:0004634">
    <property type="term" value="F:phosphopyruvate hydratase activity"/>
    <property type="evidence" value="ECO:0000250"/>
    <property type="project" value="UniProtKB"/>
</dbReference>
<dbReference type="GO" id="GO:0061621">
    <property type="term" value="P:canonical glycolysis"/>
    <property type="evidence" value="ECO:0000250"/>
    <property type="project" value="UniProtKB"/>
</dbReference>
<dbReference type="Gene3D" id="3.20.20.120">
    <property type="entry name" value="Enolase-like C-terminal domain"/>
    <property type="match status" value="2"/>
</dbReference>
<dbReference type="InterPro" id="IPR000941">
    <property type="entry name" value="Enolase"/>
</dbReference>
<dbReference type="InterPro" id="IPR036849">
    <property type="entry name" value="Enolase-like_C_sf"/>
</dbReference>
<dbReference type="InterPro" id="IPR029017">
    <property type="entry name" value="Enolase-like_N"/>
</dbReference>
<dbReference type="InterPro" id="IPR020810">
    <property type="entry name" value="Enolase_C"/>
</dbReference>
<dbReference type="InterPro" id="IPR020809">
    <property type="entry name" value="Enolase_CS"/>
</dbReference>
<dbReference type="PANTHER" id="PTHR11902:SF55">
    <property type="entry name" value="ALPHA-ENOLASE"/>
    <property type="match status" value="1"/>
</dbReference>
<dbReference type="PANTHER" id="PTHR11902">
    <property type="entry name" value="ENOLASE"/>
    <property type="match status" value="1"/>
</dbReference>
<dbReference type="Pfam" id="PF00113">
    <property type="entry name" value="Enolase_C"/>
    <property type="match status" value="2"/>
</dbReference>
<dbReference type="SMART" id="SM01192">
    <property type="entry name" value="Enolase_C"/>
    <property type="match status" value="1"/>
</dbReference>
<dbReference type="SUPFAM" id="SSF51604">
    <property type="entry name" value="Enolase C-terminal domain-like"/>
    <property type="match status" value="1"/>
</dbReference>
<dbReference type="SUPFAM" id="SSF54826">
    <property type="entry name" value="Enolase N-terminal domain-like"/>
    <property type="match status" value="1"/>
</dbReference>
<dbReference type="PROSITE" id="PS00164">
    <property type="entry name" value="ENOLASE"/>
    <property type="match status" value="1"/>
</dbReference>
<evidence type="ECO:0000250" key="1"/>
<evidence type="ECO:0000250" key="2">
    <source>
        <dbReference type="UniProtKB" id="P04764"/>
    </source>
</evidence>
<evidence type="ECO:0000250" key="3">
    <source>
        <dbReference type="UniProtKB" id="P06733"/>
    </source>
</evidence>
<evidence type="ECO:0000250" key="4">
    <source>
        <dbReference type="UniProtKB" id="P17182"/>
    </source>
</evidence>
<evidence type="ECO:0000250" key="5">
    <source>
        <dbReference type="UniProtKB" id="P56252"/>
    </source>
</evidence>
<evidence type="ECO:0000255" key="6"/>
<evidence type="ECO:0000305" key="7"/>
<reference key="1">
    <citation type="journal article" date="2010" name="Asian J. Androl.">
        <title>Glucose-regulated protein precursor (GRP78) and tumor rejection antigen (GP96) are unique to hamster caput epididymal spermatozoa.</title>
        <authorList>
            <person name="Kameshwari D.B."/>
            <person name="Bhande S."/>
            <person name="Sundaram C.S."/>
            <person name="Kota V."/>
            <person name="Siva A.B."/>
            <person name="Shivaji S."/>
        </authorList>
    </citation>
    <scope>IDENTIFICATION BY MASS SPECTROMETRY</scope>
</reference>